<keyword id="KW-1185">Reference proteome</keyword>
<keyword id="KW-0687">Ribonucleoprotein</keyword>
<keyword id="KW-0689">Ribosomal protein</keyword>
<dbReference type="EMBL" id="AE017285">
    <property type="protein sequence ID" value="AAS95799.1"/>
    <property type="molecule type" value="Genomic_DNA"/>
</dbReference>
<dbReference type="RefSeq" id="WP_010938616.1">
    <property type="nucleotide sequence ID" value="NC_002937.3"/>
</dbReference>
<dbReference type="RefSeq" id="YP_010540.1">
    <property type="nucleotide sequence ID" value="NC_002937.3"/>
</dbReference>
<dbReference type="SMR" id="Q72CG2"/>
<dbReference type="STRING" id="882.DVU_1321"/>
<dbReference type="PaxDb" id="882-DVU_1321"/>
<dbReference type="EnsemblBacteria" id="AAS95799">
    <property type="protein sequence ID" value="AAS95799"/>
    <property type="gene ID" value="DVU_1321"/>
</dbReference>
<dbReference type="KEGG" id="dvu:DVU_1321"/>
<dbReference type="PATRIC" id="fig|882.5.peg.1233"/>
<dbReference type="eggNOG" id="COG1841">
    <property type="taxonomic scope" value="Bacteria"/>
</dbReference>
<dbReference type="HOGENOM" id="CLU_131047_1_3_7"/>
<dbReference type="OrthoDB" id="9812790at2"/>
<dbReference type="PhylomeDB" id="Q72CG2"/>
<dbReference type="Proteomes" id="UP000002194">
    <property type="component" value="Chromosome"/>
</dbReference>
<dbReference type="GO" id="GO:0015934">
    <property type="term" value="C:large ribosomal subunit"/>
    <property type="evidence" value="ECO:0007669"/>
    <property type="project" value="InterPro"/>
</dbReference>
<dbReference type="GO" id="GO:0003735">
    <property type="term" value="F:structural constituent of ribosome"/>
    <property type="evidence" value="ECO:0007669"/>
    <property type="project" value="InterPro"/>
</dbReference>
<dbReference type="GO" id="GO:0006412">
    <property type="term" value="P:translation"/>
    <property type="evidence" value="ECO:0007669"/>
    <property type="project" value="InterPro"/>
</dbReference>
<dbReference type="CDD" id="cd01658">
    <property type="entry name" value="Ribosomal_L30"/>
    <property type="match status" value="1"/>
</dbReference>
<dbReference type="Gene3D" id="3.30.1390.20">
    <property type="entry name" value="Ribosomal protein L30, ferredoxin-like fold domain"/>
    <property type="match status" value="1"/>
</dbReference>
<dbReference type="HAMAP" id="MF_01371_B">
    <property type="entry name" value="Ribosomal_uL30_B"/>
    <property type="match status" value="1"/>
</dbReference>
<dbReference type="InterPro" id="IPR036919">
    <property type="entry name" value="Ribo_uL30_ferredoxin-like_sf"/>
</dbReference>
<dbReference type="InterPro" id="IPR005996">
    <property type="entry name" value="Ribosomal_uL30_bac-type"/>
</dbReference>
<dbReference type="InterPro" id="IPR016082">
    <property type="entry name" value="Ribosomal_uL30_ferredoxin-like"/>
</dbReference>
<dbReference type="NCBIfam" id="TIGR01308">
    <property type="entry name" value="rpmD_bact"/>
    <property type="match status" value="1"/>
</dbReference>
<dbReference type="Pfam" id="PF00327">
    <property type="entry name" value="Ribosomal_L30"/>
    <property type="match status" value="1"/>
</dbReference>
<dbReference type="PIRSF" id="PIRSF002211">
    <property type="entry name" value="Ribosomal_L30_bac-type"/>
    <property type="match status" value="1"/>
</dbReference>
<dbReference type="SUPFAM" id="SSF55129">
    <property type="entry name" value="Ribosomal protein L30p/L7e"/>
    <property type="match status" value="1"/>
</dbReference>
<name>RL30_NITV2</name>
<protein>
    <recommendedName>
        <fullName evidence="1">Large ribosomal subunit protein uL30</fullName>
    </recommendedName>
    <alternativeName>
        <fullName evidence="2">50S ribosomal protein L30</fullName>
    </alternativeName>
</protein>
<accession>Q72CG2</accession>
<evidence type="ECO:0000255" key="1">
    <source>
        <dbReference type="HAMAP-Rule" id="MF_01371"/>
    </source>
</evidence>
<evidence type="ECO:0000305" key="2"/>
<sequence length="56" mass="6181">MIKVKLVRSLICCNPTQRATVAALGLRKVGSEKTFKDDAAIRGMINKVKHLIEVSE</sequence>
<comment type="subunit">
    <text evidence="1">Part of the 50S ribosomal subunit.</text>
</comment>
<comment type="similarity">
    <text evidence="1">Belongs to the universal ribosomal protein uL30 family.</text>
</comment>
<gene>
    <name evidence="1" type="primary">rpmD</name>
    <name type="ordered locus">DVU_1321</name>
</gene>
<proteinExistence type="inferred from homology"/>
<organism>
    <name type="scientific">Nitratidesulfovibrio vulgaris (strain ATCC 29579 / DSM 644 / CCUG 34227 / NCIMB 8303 / VKM B-1760 / Hildenborough)</name>
    <name type="common">Desulfovibrio vulgaris</name>
    <dbReference type="NCBI Taxonomy" id="882"/>
    <lineage>
        <taxon>Bacteria</taxon>
        <taxon>Pseudomonadati</taxon>
        <taxon>Thermodesulfobacteriota</taxon>
        <taxon>Desulfovibrionia</taxon>
        <taxon>Desulfovibrionales</taxon>
        <taxon>Desulfovibrionaceae</taxon>
        <taxon>Nitratidesulfovibrio</taxon>
    </lineage>
</organism>
<feature type="chain" id="PRO_0000273782" description="Large ribosomal subunit protein uL30">
    <location>
        <begin position="1"/>
        <end position="56"/>
    </location>
</feature>
<reference key="1">
    <citation type="journal article" date="2004" name="Nat. Biotechnol.">
        <title>The genome sequence of the anaerobic, sulfate-reducing bacterium Desulfovibrio vulgaris Hildenborough.</title>
        <authorList>
            <person name="Heidelberg J.F."/>
            <person name="Seshadri R."/>
            <person name="Haveman S.A."/>
            <person name="Hemme C.L."/>
            <person name="Paulsen I.T."/>
            <person name="Kolonay J.F."/>
            <person name="Eisen J.A."/>
            <person name="Ward N.L."/>
            <person name="Methe B.A."/>
            <person name="Brinkac L.M."/>
            <person name="Daugherty S.C."/>
            <person name="DeBoy R.T."/>
            <person name="Dodson R.J."/>
            <person name="Durkin A.S."/>
            <person name="Madupu R."/>
            <person name="Nelson W.C."/>
            <person name="Sullivan S.A."/>
            <person name="Fouts D.E."/>
            <person name="Haft D.H."/>
            <person name="Selengut J."/>
            <person name="Peterson J.D."/>
            <person name="Davidsen T.M."/>
            <person name="Zafar N."/>
            <person name="Zhou L."/>
            <person name="Radune D."/>
            <person name="Dimitrov G."/>
            <person name="Hance M."/>
            <person name="Tran K."/>
            <person name="Khouri H.M."/>
            <person name="Gill J."/>
            <person name="Utterback T.R."/>
            <person name="Feldblyum T.V."/>
            <person name="Wall J.D."/>
            <person name="Voordouw G."/>
            <person name="Fraser C.M."/>
        </authorList>
    </citation>
    <scope>NUCLEOTIDE SEQUENCE [LARGE SCALE GENOMIC DNA]</scope>
    <source>
        <strain>ATCC 29579 / DSM 644 / CCUG 34227 / NCIMB 8303 / VKM B-1760 / Hildenborough</strain>
    </source>
</reference>